<accession>A9KKB3</accession>
<proteinExistence type="inferred from homology"/>
<sequence>MQVILLDDVKALGKKGEVVNVSDGYARNFILPKKLGLEATPKNLNDLKLQKAAEAKLAQEILEQAQALAKEIESKSILLKIKSGEGGRTFGSVSTKEIAIALKEQLGHDIDKKKLVLNDPIKNMGTYTVPVKLHPKVTAELKVKVDSL</sequence>
<comment type="function">
    <text evidence="1">Binds to the 23S rRNA.</text>
</comment>
<comment type="similarity">
    <text evidence="1">Belongs to the bacterial ribosomal protein bL9 family.</text>
</comment>
<feature type="chain" id="PRO_1000081473" description="Large ribosomal subunit protein bL9">
    <location>
        <begin position="1"/>
        <end position="148"/>
    </location>
</feature>
<dbReference type="EMBL" id="CP000885">
    <property type="protein sequence ID" value="ABX44104.1"/>
    <property type="molecule type" value="Genomic_DNA"/>
</dbReference>
<dbReference type="RefSeq" id="WP_012201752.1">
    <property type="nucleotide sequence ID" value="NC_010001.1"/>
</dbReference>
<dbReference type="SMR" id="A9KKB3"/>
<dbReference type="STRING" id="357809.Cphy_3757"/>
<dbReference type="KEGG" id="cpy:Cphy_3757"/>
<dbReference type="eggNOG" id="COG0359">
    <property type="taxonomic scope" value="Bacteria"/>
</dbReference>
<dbReference type="HOGENOM" id="CLU_078938_3_0_9"/>
<dbReference type="OrthoDB" id="9788336at2"/>
<dbReference type="Proteomes" id="UP000000370">
    <property type="component" value="Chromosome"/>
</dbReference>
<dbReference type="GO" id="GO:1990904">
    <property type="term" value="C:ribonucleoprotein complex"/>
    <property type="evidence" value="ECO:0007669"/>
    <property type="project" value="UniProtKB-KW"/>
</dbReference>
<dbReference type="GO" id="GO:0005840">
    <property type="term" value="C:ribosome"/>
    <property type="evidence" value="ECO:0007669"/>
    <property type="project" value="UniProtKB-KW"/>
</dbReference>
<dbReference type="GO" id="GO:0019843">
    <property type="term" value="F:rRNA binding"/>
    <property type="evidence" value="ECO:0007669"/>
    <property type="project" value="UniProtKB-UniRule"/>
</dbReference>
<dbReference type="GO" id="GO:0003735">
    <property type="term" value="F:structural constituent of ribosome"/>
    <property type="evidence" value="ECO:0007669"/>
    <property type="project" value="InterPro"/>
</dbReference>
<dbReference type="GO" id="GO:0006412">
    <property type="term" value="P:translation"/>
    <property type="evidence" value="ECO:0007669"/>
    <property type="project" value="UniProtKB-UniRule"/>
</dbReference>
<dbReference type="Gene3D" id="3.10.430.100">
    <property type="entry name" value="Ribosomal protein L9, C-terminal domain"/>
    <property type="match status" value="1"/>
</dbReference>
<dbReference type="Gene3D" id="3.40.5.10">
    <property type="entry name" value="Ribosomal protein L9, N-terminal domain"/>
    <property type="match status" value="1"/>
</dbReference>
<dbReference type="HAMAP" id="MF_00503">
    <property type="entry name" value="Ribosomal_bL9"/>
    <property type="match status" value="1"/>
</dbReference>
<dbReference type="InterPro" id="IPR000244">
    <property type="entry name" value="Ribosomal_bL9"/>
</dbReference>
<dbReference type="InterPro" id="IPR009027">
    <property type="entry name" value="Ribosomal_bL9/RNase_H1_N"/>
</dbReference>
<dbReference type="InterPro" id="IPR020594">
    <property type="entry name" value="Ribosomal_bL9_bac/chp"/>
</dbReference>
<dbReference type="InterPro" id="IPR020069">
    <property type="entry name" value="Ribosomal_bL9_C"/>
</dbReference>
<dbReference type="InterPro" id="IPR036791">
    <property type="entry name" value="Ribosomal_bL9_C_sf"/>
</dbReference>
<dbReference type="InterPro" id="IPR020070">
    <property type="entry name" value="Ribosomal_bL9_N"/>
</dbReference>
<dbReference type="InterPro" id="IPR036935">
    <property type="entry name" value="Ribosomal_bL9_N_sf"/>
</dbReference>
<dbReference type="NCBIfam" id="TIGR00158">
    <property type="entry name" value="L9"/>
    <property type="match status" value="1"/>
</dbReference>
<dbReference type="PANTHER" id="PTHR21368">
    <property type="entry name" value="50S RIBOSOMAL PROTEIN L9"/>
    <property type="match status" value="1"/>
</dbReference>
<dbReference type="Pfam" id="PF03948">
    <property type="entry name" value="Ribosomal_L9_C"/>
    <property type="match status" value="1"/>
</dbReference>
<dbReference type="Pfam" id="PF01281">
    <property type="entry name" value="Ribosomal_L9_N"/>
    <property type="match status" value="1"/>
</dbReference>
<dbReference type="SUPFAM" id="SSF55658">
    <property type="entry name" value="L9 N-domain-like"/>
    <property type="match status" value="1"/>
</dbReference>
<dbReference type="SUPFAM" id="SSF55653">
    <property type="entry name" value="Ribosomal protein L9 C-domain"/>
    <property type="match status" value="1"/>
</dbReference>
<evidence type="ECO:0000255" key="1">
    <source>
        <dbReference type="HAMAP-Rule" id="MF_00503"/>
    </source>
</evidence>
<evidence type="ECO:0000305" key="2"/>
<protein>
    <recommendedName>
        <fullName evidence="1">Large ribosomal subunit protein bL9</fullName>
    </recommendedName>
    <alternativeName>
        <fullName evidence="2">50S ribosomal protein L9</fullName>
    </alternativeName>
</protein>
<keyword id="KW-1185">Reference proteome</keyword>
<keyword id="KW-0687">Ribonucleoprotein</keyword>
<keyword id="KW-0689">Ribosomal protein</keyword>
<keyword id="KW-0694">RNA-binding</keyword>
<keyword id="KW-0699">rRNA-binding</keyword>
<name>RL9_LACP7</name>
<reference key="1">
    <citation type="submission" date="2007-11" db="EMBL/GenBank/DDBJ databases">
        <title>Complete genome sequence of Clostridium phytofermentans ISDg.</title>
        <authorList>
            <person name="Leschine S.B."/>
            <person name="Warnick T.A."/>
            <person name="Blanchard J.L."/>
            <person name="Schnell D.J."/>
            <person name="Petit E.L."/>
            <person name="LaTouf W.G."/>
            <person name="Copeland A."/>
            <person name="Lucas S."/>
            <person name="Lapidus A."/>
            <person name="Barry K."/>
            <person name="Glavina del Rio T."/>
            <person name="Dalin E."/>
            <person name="Tice H."/>
            <person name="Pitluck S."/>
            <person name="Kiss H."/>
            <person name="Brettin T."/>
            <person name="Bruce D."/>
            <person name="Detter J.C."/>
            <person name="Han C."/>
            <person name="Kuske C."/>
            <person name="Schmutz J."/>
            <person name="Larimer F."/>
            <person name="Land M."/>
            <person name="Hauser L."/>
            <person name="Kyrpides N."/>
            <person name="Kim E.A."/>
            <person name="Richardson P."/>
        </authorList>
    </citation>
    <scope>NUCLEOTIDE SEQUENCE [LARGE SCALE GENOMIC DNA]</scope>
    <source>
        <strain>ATCC 700394 / DSM 18823 / ISDg</strain>
    </source>
</reference>
<gene>
    <name evidence="1" type="primary">rplI</name>
    <name type="ordered locus">Cphy_3757</name>
</gene>
<organism>
    <name type="scientific">Lachnoclostridium phytofermentans (strain ATCC 700394 / DSM 18823 / ISDg)</name>
    <name type="common">Clostridium phytofermentans</name>
    <dbReference type="NCBI Taxonomy" id="357809"/>
    <lineage>
        <taxon>Bacteria</taxon>
        <taxon>Bacillati</taxon>
        <taxon>Bacillota</taxon>
        <taxon>Clostridia</taxon>
        <taxon>Lachnospirales</taxon>
        <taxon>Lachnospiraceae</taxon>
    </lineage>
</organism>